<gene>
    <name type="primary">GP</name>
</gene>
<proteinExistence type="inferred from homology"/>
<accession>P33455</accession>
<dbReference type="EMBL" id="S47716">
    <property type="protein sequence ID" value="AAB19434.1"/>
    <property type="molecule type" value="Genomic_RNA"/>
</dbReference>
<dbReference type="PIR" id="A43964">
    <property type="entry name" value="A43964"/>
</dbReference>
<dbReference type="SMR" id="P33455"/>
<dbReference type="GlyCosmos" id="P33455">
    <property type="glycosylation" value="5 sites, No reported glycans"/>
</dbReference>
<dbReference type="KEGG" id="vg:3648453"/>
<dbReference type="Proteomes" id="UP000207620">
    <property type="component" value="Genome"/>
</dbReference>
<dbReference type="GO" id="GO:0044167">
    <property type="term" value="C:host cell endoplasmic reticulum membrane"/>
    <property type="evidence" value="ECO:0007669"/>
    <property type="project" value="UniProtKB-SubCell"/>
</dbReference>
<dbReference type="GO" id="GO:0044178">
    <property type="term" value="C:host cell Golgi membrane"/>
    <property type="evidence" value="ECO:0007669"/>
    <property type="project" value="UniProtKB-SubCell"/>
</dbReference>
<dbReference type="GO" id="GO:0033650">
    <property type="term" value="C:host cell mitochondrion"/>
    <property type="evidence" value="ECO:0007669"/>
    <property type="project" value="UniProtKB-SubCell"/>
</dbReference>
<dbReference type="GO" id="GO:0044228">
    <property type="term" value="C:host cell surface"/>
    <property type="evidence" value="ECO:0007669"/>
    <property type="project" value="UniProtKB-SubCell"/>
</dbReference>
<dbReference type="GO" id="GO:0016020">
    <property type="term" value="C:membrane"/>
    <property type="evidence" value="ECO:0007669"/>
    <property type="project" value="UniProtKB-KW"/>
</dbReference>
<dbReference type="GO" id="GO:0055036">
    <property type="term" value="C:virion membrane"/>
    <property type="evidence" value="ECO:0007669"/>
    <property type="project" value="UniProtKB-SubCell"/>
</dbReference>
<dbReference type="GO" id="GO:0008270">
    <property type="term" value="F:zinc ion binding"/>
    <property type="evidence" value="ECO:0007669"/>
    <property type="project" value="UniProtKB-KW"/>
</dbReference>
<dbReference type="GO" id="GO:0039654">
    <property type="term" value="P:fusion of virus membrane with host endosome membrane"/>
    <property type="evidence" value="ECO:0007669"/>
    <property type="project" value="UniProtKB-KW"/>
</dbReference>
<dbReference type="GO" id="GO:0007165">
    <property type="term" value="P:signal transduction"/>
    <property type="evidence" value="ECO:0007669"/>
    <property type="project" value="InterPro"/>
</dbReference>
<dbReference type="GO" id="GO:0046718">
    <property type="term" value="P:symbiont entry into host cell"/>
    <property type="evidence" value="ECO:0007669"/>
    <property type="project" value="UniProtKB-KW"/>
</dbReference>
<dbReference type="GO" id="GO:0052170">
    <property type="term" value="P:symbiont-mediated suppression of host innate immune response"/>
    <property type="evidence" value="ECO:0007669"/>
    <property type="project" value="UniProtKB-KW"/>
</dbReference>
<dbReference type="GO" id="GO:0039527">
    <property type="term" value="P:symbiont-mediated suppression of host TRAF-mediated signal transduction"/>
    <property type="evidence" value="ECO:0007669"/>
    <property type="project" value="UniProtKB-KW"/>
</dbReference>
<dbReference type="GO" id="GO:0019062">
    <property type="term" value="P:virion attachment to host cell"/>
    <property type="evidence" value="ECO:0007669"/>
    <property type="project" value="UniProtKB-KW"/>
</dbReference>
<dbReference type="Gene3D" id="1.10.8.1320">
    <property type="match status" value="1"/>
</dbReference>
<dbReference type="InterPro" id="IPR016402">
    <property type="entry name" value="Envelope_glycoprot_Hantavirus"/>
</dbReference>
<dbReference type="InterPro" id="IPR048791">
    <property type="entry name" value="Gc_C_bunya"/>
</dbReference>
<dbReference type="InterPro" id="IPR048790">
    <property type="entry name" value="Gn-B_hanta"/>
</dbReference>
<dbReference type="InterPro" id="IPR002532">
    <property type="entry name" value="Hanta_Gc_N"/>
</dbReference>
<dbReference type="InterPro" id="IPR002534">
    <property type="entry name" value="Hanta_Gn-H"/>
</dbReference>
<dbReference type="InterPro" id="IPR012316">
    <property type="entry name" value="ITAM_motif_hantavir-typ"/>
</dbReference>
<dbReference type="Pfam" id="PF20682">
    <property type="entry name" value="Hanta_Gc_C"/>
    <property type="match status" value="1"/>
</dbReference>
<dbReference type="Pfam" id="PF01561">
    <property type="entry name" value="Hanta_Gc_N"/>
    <property type="match status" value="1"/>
</dbReference>
<dbReference type="Pfam" id="PF20679">
    <property type="entry name" value="Hanta_Gn-B"/>
    <property type="match status" value="1"/>
</dbReference>
<dbReference type="Pfam" id="PF01567">
    <property type="entry name" value="Hanta_Gn-H"/>
    <property type="match status" value="1"/>
</dbReference>
<dbReference type="Pfam" id="PF10538">
    <property type="entry name" value="ITAM_Cys-rich"/>
    <property type="match status" value="1"/>
</dbReference>
<dbReference type="PIRSF" id="PIRSF003945">
    <property type="entry name" value="M_poly_HantaV"/>
    <property type="match status" value="1"/>
</dbReference>
<dbReference type="PROSITE" id="PS51056">
    <property type="entry name" value="ITAM_2"/>
    <property type="match status" value="1"/>
</dbReference>
<organismHost>
    <name type="scientific">Homo sapiens</name>
    <name type="common">Human</name>
    <dbReference type="NCBI Taxonomy" id="9606"/>
</organismHost>
<organismHost>
    <name type="scientific">Rattus norvegicus</name>
    <name type="common">Rat</name>
    <dbReference type="NCBI Taxonomy" id="10116"/>
</organismHost>
<organismHost>
    <name type="scientific">Rattus rattus</name>
    <name type="common">Black rat</name>
    <dbReference type="NCBI Taxonomy" id="10117"/>
</organismHost>
<name>GP_SEOU8</name>
<evidence type="ECO:0000250" key="1"/>
<evidence type="ECO:0000250" key="2">
    <source>
        <dbReference type="UniProtKB" id="P08668"/>
    </source>
</evidence>
<evidence type="ECO:0000250" key="3">
    <source>
        <dbReference type="UniProtKB" id="P0DTJ1"/>
    </source>
</evidence>
<evidence type="ECO:0000250" key="4">
    <source>
        <dbReference type="UniProtKB" id="P27312"/>
    </source>
</evidence>
<evidence type="ECO:0000250" key="5">
    <source>
        <dbReference type="UniProtKB" id="P41266"/>
    </source>
</evidence>
<evidence type="ECO:0000250" key="6">
    <source>
        <dbReference type="UniProtKB" id="Q9E006"/>
    </source>
</evidence>
<evidence type="ECO:0000255" key="7"/>
<evidence type="ECO:0000255" key="8">
    <source>
        <dbReference type="PROSITE-ProRule" id="PRU00379"/>
    </source>
</evidence>
<evidence type="ECO:0000305" key="9"/>
<comment type="function">
    <molecule>Glycoprotein N</molecule>
    <text evidence="2 4">Forms homotetramers with glycoprotein C at the surface of the virion (By similarity). Attaches the virion to host cell receptors including integrin ITGAV/ITGB3 (By similarity). This attachment induces virion internalization predominantly through clathrin-dependent endocytosis (By similarity). Mediates the assembly and budding of infectious virus particles through its interaction with the nucleocapsid protein and the viral genome (By similarity). May dysregulate normal immune and endothelial cell responses through an ITAM motif (By similarity). Translocates to mitochondria, binds to host TUFM and recruits MAP1LC3B (By similarity). These interactions induce mitochondrial autophagy and therefore destruction of host MAVS leading to inhibition of type I interferon (IFN) responses (By similarity). Concomitant breakdown of glycoprotein N is apparently prevented by the nucleoprotein that may inhibit Gn-stimulated autophagosome-lysosome fusion (By similarity). Interacts with the viral genomic RNA (By similarity).</text>
</comment>
<comment type="function">
    <molecule>Glycoprotein C</molecule>
    <text evidence="2">Forms homotetramers with glycoprotein N at the surface of the virion. Attaches the virion to host cell receptors including integrin ITGAV/ITGB3. This attachment induces virion internalization predominantly through clathrin-dependent endocytosis. Class II fusion protein that promotes fusion of viral membrane with host endosomal membrane after endocytosis of the virion.</text>
</comment>
<comment type="subunit">
    <molecule>Glycoprotein N</molecule>
    <text evidence="2 3">Homodimer (By similarity). Homotetramer; forms heterotetrameric Gn-Gc spikes in the pre-fusion conformation (By similarity). Interacts (via C-terminus) with the nucleoprotein (By similarity). Interacts with host TUFM; this interaction contributes to the virus-induced degradation of mitochondria by autophagy, which leads to degradation of host MAVS and inhibition of type I interferon (IFN) responses (By similarity). Interacts with host MAP1LC3B; this interaction contributes to the virus-induced degradation of mitochondria by autophagy, which leads to degradation of host MAVS and inhibition of type I interferon (IFN) responses (By similarity).</text>
</comment>
<comment type="subunit">
    <molecule>Glycoprotein C</molecule>
    <text evidence="2 4">Homodimer. Homotetramer; forms heterotetrameric Gn-Gc spikes in the pre-fusion conformation. Homotrimer; forms homotrimer in the post-fusion conformation at acidic pH (By similarity). Interacts (via C-terminus) with the nucleoprotein (By similarity).</text>
</comment>
<comment type="subcellular location">
    <molecule>Glycoprotein N</molecule>
    <subcellularLocation>
        <location evidence="2">Virion membrane</location>
        <topology evidence="9">Multi-pass membrane protein</topology>
    </subcellularLocation>
    <subcellularLocation>
        <location evidence="2">Host cell surface</location>
    </subcellularLocation>
    <subcellularLocation>
        <location evidence="2">Host Golgi apparatus membrane</location>
        <topology evidence="2">Multi-pass membrane protein</topology>
    </subcellularLocation>
    <subcellularLocation>
        <location evidence="2">Host endoplasmic reticulum membrane</location>
        <topology evidence="2">Multi-pass membrane protein</topology>
    </subcellularLocation>
    <subcellularLocation>
        <location evidence="2">Host mitochondrion</location>
    </subcellularLocation>
    <text evidence="4">Interaction between glycoprotein N and glycoprotein C is essential for proper targeting of glycoprotein N to the host Golgi complex, where virion budding occurs.</text>
</comment>
<comment type="subcellular location">
    <molecule>Glycoprotein C</molecule>
    <subcellularLocation>
        <location evidence="2">Virion membrane</location>
        <topology evidence="9">Single-pass type I membrane protein</topology>
    </subcellularLocation>
    <subcellularLocation>
        <location evidence="2">Host cell surface</location>
    </subcellularLocation>
    <subcellularLocation>
        <location evidence="2">Host Golgi apparatus membrane</location>
        <topology evidence="2">Single-pass type I membrane protein</topology>
    </subcellularLocation>
    <subcellularLocation>
        <location evidence="2">Host endoplasmic reticulum membrane</location>
        <topology evidence="2">Single-pass type I membrane protein</topology>
    </subcellularLocation>
    <text evidence="2 9">Budding probably takes place at the host Golgi (Probable). Glycoprotein C cytoplasmic tail is important for efficient Golgi localization (By similarity).</text>
</comment>
<comment type="domain">
    <molecule>Glycoprotein N</molecule>
    <text evidence="2 3 4 6">The YxxL motif at the C-terminus is indispensable for the interaction with MAP1LC3B and for the Gn-mediated induction of mitochondrial autophagy (By similarity). The cytoplasmic tail is involved in the inhibition of the host innate immune response (By similarity). The C-terminus of the cytoplasmic tail is involved in binding to the viral genome and the nucleocapsid (By similarity). Contains 2 contiguous zinc-fingers (By similarity).</text>
</comment>
<comment type="domain">
    <molecule>Glycoprotein C</molecule>
    <text evidence="4">The C-terminus is necessary for proper localization in the Golgi (By similarity). The cytoplasmic tail is involved in binding to the nucleocapsid (By similarity).</text>
</comment>
<comment type="PTM">
    <molecule>Envelopment polyprotein</molecule>
    <text evidence="2">Envelope polyprotein precursor is quickly cleaved in vivo just after synthesis, presumably by host signal peptidase.</text>
</comment>
<comment type="similarity">
    <text evidence="9">Belongs to the hantavirus envelope glycoprotein family.</text>
</comment>
<feature type="signal peptide" evidence="7">
    <location>
        <begin position="1"/>
        <end position="17"/>
    </location>
</feature>
<feature type="chain" id="PRO_0000036838" description="Envelopment polyprotein">
    <location>
        <begin position="18"/>
        <end position="1133"/>
    </location>
</feature>
<feature type="chain" id="PRO_0000036839" description="Glycoprotein N" evidence="1">
    <location>
        <begin position="18"/>
        <end position="646"/>
    </location>
</feature>
<feature type="chain" id="PRO_0000036840" description="Glycoprotein C" evidence="1">
    <location>
        <begin position="647"/>
        <end position="1133"/>
    </location>
</feature>
<feature type="topological domain" description="Lumenal" evidence="7">
    <location>
        <begin position="18"/>
        <end position="484"/>
    </location>
</feature>
<feature type="transmembrane region" description="Helical" evidence="7">
    <location>
        <begin position="485"/>
        <end position="504"/>
    </location>
</feature>
<feature type="topological domain" description="Cytoplasmic" evidence="7">
    <location>
        <begin position="505"/>
        <end position="626"/>
    </location>
</feature>
<feature type="transmembrane region" description="Helical" evidence="7">
    <location>
        <begin position="627"/>
        <end position="647"/>
    </location>
</feature>
<feature type="topological domain" description="Lumenal" evidence="7">
    <location>
        <begin position="648"/>
        <end position="1104"/>
    </location>
</feature>
<feature type="transmembrane region" description="Helical" evidence="7">
    <location>
        <begin position="1105"/>
        <end position="1125"/>
    </location>
</feature>
<feature type="topological domain" description="Cytoplasmic" evidence="7">
    <location>
        <begin position="1126"/>
        <end position="1133"/>
    </location>
</feature>
<feature type="domain" description="ITAM" evidence="8">
    <location>
        <begin position="609"/>
        <end position="632"/>
    </location>
</feature>
<feature type="zinc finger region" description="CCHC-type 1" evidence="6">
    <location>
        <begin position="543"/>
        <end position="563"/>
    </location>
</feature>
<feature type="zinc finger region" description="CCHC-type 2" evidence="6">
    <location>
        <begin position="568"/>
        <end position="589"/>
    </location>
</feature>
<feature type="region of interest" description="Binding to the ribonucleoprotein" evidence="6">
    <location>
        <begin position="514"/>
        <end position="531"/>
    </location>
</feature>
<feature type="region of interest" description="Binding to the ribonucleoprotein" evidence="4">
    <location>
        <begin position="586"/>
        <end position="603"/>
    </location>
</feature>
<feature type="region of interest" description="Binding to the ribonucleoprotein" evidence="6">
    <location>
        <begin position="590"/>
        <end position="601"/>
    </location>
</feature>
<feature type="region of interest" description="Binding to the ribonucleoprotein" evidence="4">
    <location>
        <begin position="609"/>
        <end position="623"/>
    </location>
</feature>
<feature type="region of interest" description="Fusion loop" evidence="5">
    <location>
        <begin position="755"/>
        <end position="775"/>
    </location>
</feature>
<feature type="region of interest" description="Binding to the ribonucleoprotein" evidence="4">
    <location>
        <begin position="1120"/>
        <end position="1133"/>
    </location>
</feature>
<feature type="short sequence motif" description="YxxL" evidence="2">
    <location>
        <begin position="613"/>
        <end position="616"/>
    </location>
</feature>
<feature type="site" description="Cleavage; by host signal peptidase" evidence="2">
    <location>
        <begin position="646"/>
        <end position="647"/>
    </location>
</feature>
<feature type="glycosylation site" description="N-linked (GlcNAc...) asparagine; by host" evidence="7">
    <location>
        <position position="132"/>
    </location>
</feature>
<feature type="glycosylation site" description="N-linked (GlcNAc...) asparagine; by host" evidence="7">
    <location>
        <position position="233"/>
    </location>
</feature>
<feature type="glycosylation site" description="N-linked (GlcNAc...) asparagine; by host" evidence="7">
    <location>
        <position position="345"/>
    </location>
</feature>
<feature type="glycosylation site" description="N-linked (GlcNAc...) asparagine; by host" evidence="7">
    <location>
        <position position="397"/>
    </location>
</feature>
<feature type="glycosylation site" description="N-linked (GlcNAc...) asparagine; by host" evidence="2">
    <location>
        <position position="926"/>
    </location>
</feature>
<feature type="disulfide bond" evidence="6">
    <location>
        <begin position="27"/>
        <end position="149"/>
    </location>
</feature>
<feature type="disulfide bond" evidence="6">
    <location>
        <begin position="61"/>
        <end position="155"/>
    </location>
</feature>
<feature type="disulfide bond" evidence="6">
    <location>
        <begin position="107"/>
        <end position="126"/>
    </location>
</feature>
<feature type="disulfide bond" evidence="6">
    <location>
        <begin position="131"/>
        <end position="136"/>
    </location>
</feature>
<feature type="disulfide bond" evidence="6">
    <location>
        <begin position="173"/>
        <end position="183"/>
    </location>
</feature>
<feature type="disulfide bond" evidence="6">
    <location>
        <begin position="208"/>
        <end position="245"/>
    </location>
</feature>
<feature type="disulfide bond" evidence="6">
    <location>
        <begin position="232"/>
        <end position="349"/>
    </location>
</feature>
<feature type="disulfide bond" evidence="6">
    <location>
        <begin position="374"/>
        <end position="433"/>
    </location>
</feature>
<feature type="disulfide bond" evidence="6">
    <location>
        <begin position="378"/>
        <end position="387"/>
    </location>
</feature>
<feature type="disulfide bond" evidence="6">
    <location>
        <begin position="403"/>
        <end position="422"/>
    </location>
</feature>
<feature type="disulfide bond" evidence="6">
    <location>
        <begin position="450"/>
        <end position="473"/>
    </location>
</feature>
<feature type="disulfide bond" evidence="2">
    <location>
        <begin position="733"/>
        <end position="768"/>
    </location>
</feature>
<feature type="disulfide bond" evidence="2">
    <location>
        <begin position="737"/>
        <end position="775"/>
    </location>
</feature>
<feature type="disulfide bond" evidence="2">
    <location>
        <begin position="749"/>
        <end position="883"/>
    </location>
</feature>
<feature type="disulfide bond" evidence="2">
    <location>
        <begin position="763"/>
        <end position="894"/>
    </location>
</feature>
<feature type="disulfide bond" evidence="2">
    <location>
        <begin position="778"/>
        <end position="902"/>
    </location>
</feature>
<feature type="disulfide bond" evidence="2">
    <location>
        <begin position="804"/>
        <end position="813"/>
    </location>
</feature>
<feature type="disulfide bond" evidence="2">
    <location>
        <begin position="821"/>
        <end position="830"/>
    </location>
</feature>
<feature type="disulfide bond" evidence="2">
    <location>
        <begin position="861"/>
        <end position="865"/>
    </location>
</feature>
<feature type="disulfide bond" evidence="2">
    <location>
        <begin position="968"/>
        <end position="998"/>
    </location>
</feature>
<feature type="disulfide bond" evidence="2">
    <location>
        <begin position="991"/>
        <end position="1043"/>
    </location>
</feature>
<feature type="disulfide bond" evidence="2">
    <location>
        <begin position="1008"/>
        <end position="1013"/>
    </location>
</feature>
<feature type="disulfide bond" evidence="2">
    <location>
        <begin position="1044"/>
        <end position="1049"/>
    </location>
</feature>
<feature type="disulfide bond" evidence="6">
    <location>
        <begin position="1083"/>
        <end position="1087"/>
    </location>
</feature>
<sequence>MWSLLLLAALVGQGFALKNVFDMRIQCPHSVKFGETSVSGYTELPPLSLQEAEQLVPESSCNMDNHQSLSTINKLTKVIWRKKANQESANQNSFELMESEVSFKGLCMLKHRMVEESYRNRRSVICYDLACNSTFCKPTVYMIVPIHACNMMKSCLIGLGPYRVQVVYERTYCTTGILTEGKCFVPDKAVVSALKRGMYAIASIETICFFIHQKGNTYKIVTAITSAMGSKCNNTDTKVQGYYICIIGGNSAPVYAPAGEDFRAMEVFSGIITSPHGEDHDLPGEEIATYQISGQIEAKIPHTVSSKNLKLTAFAGIPSYSSTSILTASEDGRFIFSPGLFPNLNQSVCDNNALPLIWRGLIDLTGYYEAVHPCNVFCVLSGPGASCEAFSEGGIFNITSPMCLVSKQNRFRAAEQQISFVCQRVDMDIIVYCNGQKKTILTKTLVIGQCIYTITSLFSLLPGVAHSIAIELCVPGFHGWATAALLITFCFGWVLIPACTLAILLVLKFFANILHTSNQENRFKAILRKIKEEFEKTKGSMVCEICKYECETLKELKAHNLSCVQGECPYCFTHCEPTETAIQAHYKVCQATHRFREDLKKTVTPQNIGPGCYRTLNLFRYKSRCYILTMWTLLLIIESILWAASAAEIPLVPLWTDNAHGVGSVPMHTDLELDFSLPSSSRYTYKRHLTNPVNDQQSVSLHIEIESQGIGADVHHLGHWYDARLNLKTSFHCYGACTKYQYPWHTAKCHFEKDYEYENSWACNPPDCPGVGTGCTACGLYLDQLKPVGTAFKIISVRYSRKVCVQFGEEYLCKTIDMNDCFVTRHAKICIIGTVSKFSQGDTLLFLGPMEGGGIIFKHWCTSTCHFGDPGDVMGPKDKPFICPEFPGQFRKKCNFATTPVCEYDGNIISGYKKVLATIDSFQSFNTSNIHFTDERIEWRDPDGMLRDHINIVISKDIDFENLAENPCKVGLQAANIEGAWGSGVGFTLTCQVSLTECPTFLTSIRACDMAICYGAESVTLSRGQNTVKITGKGGHSGSSFKCCHGKECSLTGLQASAPHLDKVNGISELENEKVYDDGAPECGITCWFKKSGEWVMGIINGNWVVLIVLCVLLLFSLILLSILCPVRKHKKS</sequence>
<reference key="1">
    <citation type="journal article" date="1991" name="Virus Res.">
        <title>Molecular characterization of the M genomic segment of the Seoul 80-39 virus; nucleotide and amino acid sequence comparisons with other hantaviruses reveal the evolutionary pathway.</title>
        <authorList>
            <person name="Antic D."/>
            <person name="Lim B.U."/>
            <person name="Kang C.Y."/>
        </authorList>
    </citation>
    <scope>NUCLEOTIDE SEQUENCE [GENOMIC RNA]</scope>
</reference>
<reference key="2">
    <citation type="journal article" date="2014" name="Viruses">
        <title>Hantavirus Gn and Gc envelope glycoproteins: key structural units for virus cell entry and virus assembly.</title>
        <authorList>
            <person name="Cifuentes-Munoz N."/>
            <person name="Salazar-Quiroz N."/>
            <person name="Tischler N.D."/>
        </authorList>
    </citation>
    <scope>REVIEW</scope>
</reference>
<protein>
    <recommendedName>
        <fullName>Envelopment polyprotein</fullName>
    </recommendedName>
    <alternativeName>
        <fullName>M polyprotein</fullName>
    </alternativeName>
    <component>
        <recommendedName>
            <fullName evidence="2">Glycoprotein N</fullName>
            <shortName>Gn</shortName>
        </recommendedName>
        <alternativeName>
            <fullName>Glycoprotein G1</fullName>
        </alternativeName>
    </component>
    <component>
        <recommendedName>
            <fullName evidence="2">Glycoprotein C</fullName>
            <shortName>Gc</shortName>
        </recommendedName>
        <alternativeName>
            <fullName>Glycoprotein G2</fullName>
        </alternativeName>
    </component>
</protein>
<organism>
    <name type="scientific">Seoul virus (strain 80-39)</name>
    <dbReference type="NCBI Taxonomy" id="12557"/>
    <lineage>
        <taxon>Viruses</taxon>
        <taxon>Riboviria</taxon>
        <taxon>Orthornavirae</taxon>
        <taxon>Negarnaviricota</taxon>
        <taxon>Polyploviricotina</taxon>
        <taxon>Ellioviricetes</taxon>
        <taxon>Bunyavirales</taxon>
        <taxon>Hantaviridae</taxon>
        <taxon>Mammantavirinae</taxon>
        <taxon>Orthohantavirus</taxon>
        <taxon>Orthohantavirus seoulense</taxon>
    </lineage>
</organism>
<keyword id="KW-1015">Disulfide bond</keyword>
<keyword id="KW-1170">Fusion of virus membrane with host endosomal membrane</keyword>
<keyword id="KW-1168">Fusion of virus membrane with host membrane</keyword>
<keyword id="KW-0325">Glycoprotein</keyword>
<keyword id="KW-1038">Host endoplasmic reticulum</keyword>
<keyword id="KW-1040">Host Golgi apparatus</keyword>
<keyword id="KW-1043">Host membrane</keyword>
<keyword id="KW-1045">Host mitochondrion</keyword>
<keyword id="KW-0945">Host-virus interaction</keyword>
<keyword id="KW-1090">Inhibition of host innate immune response by virus</keyword>
<keyword id="KW-1113">Inhibition of host RLR pathway by virus</keyword>
<keyword id="KW-1110">Inhibition of host TRAFs by virus</keyword>
<keyword id="KW-0472">Membrane</keyword>
<keyword id="KW-0479">Metal-binding</keyword>
<keyword id="KW-0597">Phosphoprotein</keyword>
<keyword id="KW-0677">Repeat</keyword>
<keyword id="KW-0732">Signal</keyword>
<keyword id="KW-0812">Transmembrane</keyword>
<keyword id="KW-1133">Transmembrane helix</keyword>
<keyword id="KW-1161">Viral attachment to host cell</keyword>
<keyword id="KW-0899">Viral immunoevasion</keyword>
<keyword id="KW-1162">Viral penetration into host cytoplasm</keyword>
<keyword id="KW-0946">Virion</keyword>
<keyword id="KW-1160">Virus entry into host cell</keyword>
<keyword id="KW-0862">Zinc</keyword>
<keyword id="KW-0863">Zinc-finger</keyword>